<organism>
    <name type="scientific">Trichodesmium erythraeum (strain IMS101)</name>
    <dbReference type="NCBI Taxonomy" id="203124"/>
    <lineage>
        <taxon>Bacteria</taxon>
        <taxon>Bacillati</taxon>
        <taxon>Cyanobacteriota</taxon>
        <taxon>Cyanophyceae</taxon>
        <taxon>Oscillatoriophycideae</taxon>
        <taxon>Oscillatoriales</taxon>
        <taxon>Microcoleaceae</taxon>
        <taxon>Trichodesmium</taxon>
    </lineage>
</organism>
<reference key="1">
    <citation type="journal article" date="2015" name="Proc. Natl. Acad. Sci. U.S.A.">
        <title>Trichodesmium genome maintains abundant, widespread noncoding DNA in situ, despite oligotrophic lifestyle.</title>
        <authorList>
            <person name="Walworth N."/>
            <person name="Pfreundt U."/>
            <person name="Nelson W.C."/>
            <person name="Mincer T."/>
            <person name="Heidelberg J.F."/>
            <person name="Fu F."/>
            <person name="Waterbury J.B."/>
            <person name="Glavina del Rio T."/>
            <person name="Goodwin L."/>
            <person name="Kyrpides N.C."/>
            <person name="Land M.L."/>
            <person name="Woyke T."/>
            <person name="Hutchins D.A."/>
            <person name="Hess W.R."/>
            <person name="Webb E.A."/>
        </authorList>
    </citation>
    <scope>NUCLEOTIDE SEQUENCE [LARGE SCALE GENOMIC DNA]</scope>
    <source>
        <strain>IMS101</strain>
    </source>
</reference>
<evidence type="ECO:0000250" key="1"/>
<evidence type="ECO:0000255" key="2">
    <source>
        <dbReference type="HAMAP-Rule" id="MF_00118"/>
    </source>
</evidence>
<keyword id="KW-0963">Cytoplasm</keyword>
<keyword id="KW-0251">Elongation factor</keyword>
<keyword id="KW-0342">GTP-binding</keyword>
<keyword id="KW-0378">Hydrolase</keyword>
<keyword id="KW-0460">Magnesium</keyword>
<keyword id="KW-0479">Metal-binding</keyword>
<keyword id="KW-0547">Nucleotide-binding</keyword>
<keyword id="KW-0648">Protein biosynthesis</keyword>
<sequence>MARAKFERNKPHVNIGTIGHVDHGKTTLTAAITMSLAAQGKAKARNYADIDAAPEEKARGITINTAHVEYETEGRHYAHVDCPGHADYVKNMITGAAQMDGAILVVSAADGPMPQTREHILLAKQVGVPNIVIFLNKQDMVDDEELLELVELEVRELLSDYDFDGDNIPIVAGSALQAVEALTANPGIGKGENEWVDKILSLMDEVDGYIPQPERDVDKPFLMAVEDVFSITGRGTVATGRIERGKIKVGETVELVGIKDTRNSTVTGVEMFQKILDEGMAGDNVGLLLRGMQKDDIQRGMVLAKSGSITPHKKFESEVYVLKKEEGGRHTPFFPNYRPQFYIRTTDVTGAIESFTADDGSVAEMVMPGDRIKMTVQLINPVAIEQGMRFAIREGGRTIGAGVVSKIVE</sequence>
<dbReference type="EC" id="3.6.5.3" evidence="2"/>
<dbReference type="EMBL" id="CP000393">
    <property type="protein sequence ID" value="ABG49932.1"/>
    <property type="molecule type" value="Genomic_DNA"/>
</dbReference>
<dbReference type="RefSeq" id="WP_011610327.1">
    <property type="nucleotide sequence ID" value="NC_008312.1"/>
</dbReference>
<dbReference type="SMR" id="Q118Z2"/>
<dbReference type="STRING" id="203124.Tery_0476"/>
<dbReference type="KEGG" id="ter:Tery_0476"/>
<dbReference type="eggNOG" id="COG0050">
    <property type="taxonomic scope" value="Bacteria"/>
</dbReference>
<dbReference type="HOGENOM" id="CLU_007265_0_1_3"/>
<dbReference type="OrthoDB" id="9804504at2"/>
<dbReference type="GO" id="GO:0005829">
    <property type="term" value="C:cytosol"/>
    <property type="evidence" value="ECO:0007669"/>
    <property type="project" value="TreeGrafter"/>
</dbReference>
<dbReference type="GO" id="GO:0005525">
    <property type="term" value="F:GTP binding"/>
    <property type="evidence" value="ECO:0007669"/>
    <property type="project" value="UniProtKB-UniRule"/>
</dbReference>
<dbReference type="GO" id="GO:0003924">
    <property type="term" value="F:GTPase activity"/>
    <property type="evidence" value="ECO:0007669"/>
    <property type="project" value="InterPro"/>
</dbReference>
<dbReference type="GO" id="GO:0003746">
    <property type="term" value="F:translation elongation factor activity"/>
    <property type="evidence" value="ECO:0007669"/>
    <property type="project" value="UniProtKB-UniRule"/>
</dbReference>
<dbReference type="CDD" id="cd01884">
    <property type="entry name" value="EF_Tu"/>
    <property type="match status" value="1"/>
</dbReference>
<dbReference type="CDD" id="cd03697">
    <property type="entry name" value="EFTU_II"/>
    <property type="match status" value="1"/>
</dbReference>
<dbReference type="CDD" id="cd03707">
    <property type="entry name" value="EFTU_III"/>
    <property type="match status" value="1"/>
</dbReference>
<dbReference type="FunFam" id="2.40.30.10:FF:000001">
    <property type="entry name" value="Elongation factor Tu"/>
    <property type="match status" value="1"/>
</dbReference>
<dbReference type="FunFam" id="2.40.30.10:FF:000046">
    <property type="entry name" value="Elongation factor Tu"/>
    <property type="match status" value="1"/>
</dbReference>
<dbReference type="FunFam" id="3.40.50.300:FF:000003">
    <property type="entry name" value="Elongation factor Tu"/>
    <property type="match status" value="1"/>
</dbReference>
<dbReference type="Gene3D" id="3.40.50.300">
    <property type="entry name" value="P-loop containing nucleotide triphosphate hydrolases"/>
    <property type="match status" value="1"/>
</dbReference>
<dbReference type="Gene3D" id="2.40.30.10">
    <property type="entry name" value="Translation factors"/>
    <property type="match status" value="2"/>
</dbReference>
<dbReference type="HAMAP" id="MF_00118_B">
    <property type="entry name" value="EF_Tu_B"/>
    <property type="match status" value="1"/>
</dbReference>
<dbReference type="InterPro" id="IPR041709">
    <property type="entry name" value="EF-Tu_GTP-bd"/>
</dbReference>
<dbReference type="InterPro" id="IPR050055">
    <property type="entry name" value="EF-Tu_GTPase"/>
</dbReference>
<dbReference type="InterPro" id="IPR004161">
    <property type="entry name" value="EFTu-like_2"/>
</dbReference>
<dbReference type="InterPro" id="IPR033720">
    <property type="entry name" value="EFTU_2"/>
</dbReference>
<dbReference type="InterPro" id="IPR031157">
    <property type="entry name" value="G_TR_CS"/>
</dbReference>
<dbReference type="InterPro" id="IPR027417">
    <property type="entry name" value="P-loop_NTPase"/>
</dbReference>
<dbReference type="InterPro" id="IPR005225">
    <property type="entry name" value="Small_GTP-bd"/>
</dbReference>
<dbReference type="InterPro" id="IPR000795">
    <property type="entry name" value="T_Tr_GTP-bd_dom"/>
</dbReference>
<dbReference type="InterPro" id="IPR009000">
    <property type="entry name" value="Transl_B-barrel_sf"/>
</dbReference>
<dbReference type="InterPro" id="IPR009001">
    <property type="entry name" value="Transl_elong_EF1A/Init_IF2_C"/>
</dbReference>
<dbReference type="InterPro" id="IPR004541">
    <property type="entry name" value="Transl_elong_EFTu/EF1A_bac/org"/>
</dbReference>
<dbReference type="InterPro" id="IPR004160">
    <property type="entry name" value="Transl_elong_EFTu/EF1A_C"/>
</dbReference>
<dbReference type="NCBIfam" id="TIGR00485">
    <property type="entry name" value="EF-Tu"/>
    <property type="match status" value="1"/>
</dbReference>
<dbReference type="NCBIfam" id="NF000766">
    <property type="entry name" value="PRK00049.1"/>
    <property type="match status" value="1"/>
</dbReference>
<dbReference type="NCBIfam" id="NF009372">
    <property type="entry name" value="PRK12735.1"/>
    <property type="match status" value="1"/>
</dbReference>
<dbReference type="NCBIfam" id="NF009373">
    <property type="entry name" value="PRK12736.1"/>
    <property type="match status" value="1"/>
</dbReference>
<dbReference type="NCBIfam" id="TIGR00231">
    <property type="entry name" value="small_GTP"/>
    <property type="match status" value="1"/>
</dbReference>
<dbReference type="PANTHER" id="PTHR43721:SF22">
    <property type="entry name" value="ELONGATION FACTOR TU, MITOCHONDRIAL"/>
    <property type="match status" value="1"/>
</dbReference>
<dbReference type="PANTHER" id="PTHR43721">
    <property type="entry name" value="ELONGATION FACTOR TU-RELATED"/>
    <property type="match status" value="1"/>
</dbReference>
<dbReference type="Pfam" id="PF00009">
    <property type="entry name" value="GTP_EFTU"/>
    <property type="match status" value="1"/>
</dbReference>
<dbReference type="Pfam" id="PF03144">
    <property type="entry name" value="GTP_EFTU_D2"/>
    <property type="match status" value="1"/>
</dbReference>
<dbReference type="Pfam" id="PF03143">
    <property type="entry name" value="GTP_EFTU_D3"/>
    <property type="match status" value="1"/>
</dbReference>
<dbReference type="PRINTS" id="PR00315">
    <property type="entry name" value="ELONGATNFCT"/>
</dbReference>
<dbReference type="SUPFAM" id="SSF50465">
    <property type="entry name" value="EF-Tu/eEF-1alpha/eIF2-gamma C-terminal domain"/>
    <property type="match status" value="1"/>
</dbReference>
<dbReference type="SUPFAM" id="SSF52540">
    <property type="entry name" value="P-loop containing nucleoside triphosphate hydrolases"/>
    <property type="match status" value="1"/>
</dbReference>
<dbReference type="SUPFAM" id="SSF50447">
    <property type="entry name" value="Translation proteins"/>
    <property type="match status" value="1"/>
</dbReference>
<dbReference type="PROSITE" id="PS00301">
    <property type="entry name" value="G_TR_1"/>
    <property type="match status" value="1"/>
</dbReference>
<dbReference type="PROSITE" id="PS51722">
    <property type="entry name" value="G_TR_2"/>
    <property type="match status" value="1"/>
</dbReference>
<name>EFTU_TRIEI</name>
<gene>
    <name evidence="2" type="primary">tuf</name>
    <name type="ordered locus">Tery_0476</name>
</gene>
<proteinExistence type="inferred from homology"/>
<protein>
    <recommendedName>
        <fullName evidence="2">Elongation factor Tu</fullName>
        <shortName evidence="2">EF-Tu</shortName>
        <ecNumber evidence="2">3.6.5.3</ecNumber>
    </recommendedName>
</protein>
<accession>Q118Z2</accession>
<feature type="chain" id="PRO_1000015781" description="Elongation factor Tu">
    <location>
        <begin position="1"/>
        <end position="409"/>
    </location>
</feature>
<feature type="domain" description="tr-type G">
    <location>
        <begin position="10"/>
        <end position="214"/>
    </location>
</feature>
<feature type="region of interest" description="G1" evidence="1">
    <location>
        <begin position="19"/>
        <end position="26"/>
    </location>
</feature>
<feature type="region of interest" description="G2" evidence="1">
    <location>
        <begin position="60"/>
        <end position="64"/>
    </location>
</feature>
<feature type="region of interest" description="G3" evidence="1">
    <location>
        <begin position="81"/>
        <end position="84"/>
    </location>
</feature>
<feature type="region of interest" description="G4" evidence="1">
    <location>
        <begin position="136"/>
        <end position="139"/>
    </location>
</feature>
<feature type="region of interest" description="G5" evidence="1">
    <location>
        <begin position="174"/>
        <end position="176"/>
    </location>
</feature>
<feature type="binding site" evidence="2">
    <location>
        <begin position="19"/>
        <end position="26"/>
    </location>
    <ligand>
        <name>GTP</name>
        <dbReference type="ChEBI" id="CHEBI:37565"/>
    </ligand>
</feature>
<feature type="binding site" evidence="2">
    <location>
        <position position="26"/>
    </location>
    <ligand>
        <name>Mg(2+)</name>
        <dbReference type="ChEBI" id="CHEBI:18420"/>
    </ligand>
</feature>
<feature type="binding site" evidence="2">
    <location>
        <begin position="81"/>
        <end position="85"/>
    </location>
    <ligand>
        <name>GTP</name>
        <dbReference type="ChEBI" id="CHEBI:37565"/>
    </ligand>
</feature>
<feature type="binding site" evidence="2">
    <location>
        <begin position="136"/>
        <end position="139"/>
    </location>
    <ligand>
        <name>GTP</name>
        <dbReference type="ChEBI" id="CHEBI:37565"/>
    </ligand>
</feature>
<comment type="function">
    <text evidence="2">GTP hydrolase that promotes the GTP-dependent binding of aminoacyl-tRNA to the A-site of ribosomes during protein biosynthesis.</text>
</comment>
<comment type="catalytic activity">
    <reaction evidence="2">
        <text>GTP + H2O = GDP + phosphate + H(+)</text>
        <dbReference type="Rhea" id="RHEA:19669"/>
        <dbReference type="ChEBI" id="CHEBI:15377"/>
        <dbReference type="ChEBI" id="CHEBI:15378"/>
        <dbReference type="ChEBI" id="CHEBI:37565"/>
        <dbReference type="ChEBI" id="CHEBI:43474"/>
        <dbReference type="ChEBI" id="CHEBI:58189"/>
        <dbReference type="EC" id="3.6.5.3"/>
    </reaction>
    <physiologicalReaction direction="left-to-right" evidence="2">
        <dbReference type="Rhea" id="RHEA:19670"/>
    </physiologicalReaction>
</comment>
<comment type="subunit">
    <text evidence="2">Monomer.</text>
</comment>
<comment type="subcellular location">
    <subcellularLocation>
        <location evidence="2">Cytoplasm</location>
    </subcellularLocation>
</comment>
<comment type="similarity">
    <text evidence="2">Belongs to the TRAFAC class translation factor GTPase superfamily. Classic translation factor GTPase family. EF-Tu/EF-1A subfamily.</text>
</comment>